<keyword id="KW-0067">ATP-binding</keyword>
<keyword id="KW-0436">Ligase</keyword>
<keyword id="KW-0547">Nucleotide-binding</keyword>
<keyword id="KW-0648">Protein biosynthesis</keyword>
<keyword id="KW-1185">Reference proteome</keyword>
<sequence>MSTFTTDEVARLANLARIDLTPAELERYAGELEVIASAVARVSEVAGDDVPATSHPIPLTNVWRDDVAAPTLDRGEVLASAPEAADGKFAVPQILGEE</sequence>
<organism>
    <name type="scientific">Beutenbergia cavernae (strain ATCC BAA-8 / DSM 12333 / CCUG 43141 / JCM 11478 / NBRC 16432 / NCIMB 13614 / HKI 0122)</name>
    <dbReference type="NCBI Taxonomy" id="471853"/>
    <lineage>
        <taxon>Bacteria</taxon>
        <taxon>Bacillati</taxon>
        <taxon>Actinomycetota</taxon>
        <taxon>Actinomycetes</taxon>
        <taxon>Micrococcales</taxon>
        <taxon>Beutenbergiaceae</taxon>
        <taxon>Beutenbergia</taxon>
    </lineage>
</organism>
<accession>C5C2F6</accession>
<feature type="chain" id="PRO_1000203064" description="Aspartyl/glutamyl-tRNA(Asn/Gln) amidotransferase subunit C">
    <location>
        <begin position="1"/>
        <end position="98"/>
    </location>
</feature>
<dbReference type="EC" id="6.3.5.-" evidence="1"/>
<dbReference type="EMBL" id="CP001618">
    <property type="protein sequence ID" value="ACQ79642.1"/>
    <property type="molecule type" value="Genomic_DNA"/>
</dbReference>
<dbReference type="RefSeq" id="WP_015881882.1">
    <property type="nucleotide sequence ID" value="NC_012669.1"/>
</dbReference>
<dbReference type="SMR" id="C5C2F6"/>
<dbReference type="STRING" id="471853.Bcav_1383"/>
<dbReference type="KEGG" id="bcv:Bcav_1383"/>
<dbReference type="eggNOG" id="COG0721">
    <property type="taxonomic scope" value="Bacteria"/>
</dbReference>
<dbReference type="HOGENOM" id="CLU_105899_1_0_11"/>
<dbReference type="OrthoDB" id="5295223at2"/>
<dbReference type="Proteomes" id="UP000007962">
    <property type="component" value="Chromosome"/>
</dbReference>
<dbReference type="GO" id="GO:0050566">
    <property type="term" value="F:asparaginyl-tRNA synthase (glutamine-hydrolyzing) activity"/>
    <property type="evidence" value="ECO:0007669"/>
    <property type="project" value="RHEA"/>
</dbReference>
<dbReference type="GO" id="GO:0005524">
    <property type="term" value="F:ATP binding"/>
    <property type="evidence" value="ECO:0007669"/>
    <property type="project" value="UniProtKB-KW"/>
</dbReference>
<dbReference type="GO" id="GO:0050567">
    <property type="term" value="F:glutaminyl-tRNA synthase (glutamine-hydrolyzing) activity"/>
    <property type="evidence" value="ECO:0007669"/>
    <property type="project" value="UniProtKB-UniRule"/>
</dbReference>
<dbReference type="GO" id="GO:0006450">
    <property type="term" value="P:regulation of translational fidelity"/>
    <property type="evidence" value="ECO:0007669"/>
    <property type="project" value="InterPro"/>
</dbReference>
<dbReference type="GO" id="GO:0006412">
    <property type="term" value="P:translation"/>
    <property type="evidence" value="ECO:0007669"/>
    <property type="project" value="UniProtKB-UniRule"/>
</dbReference>
<dbReference type="Gene3D" id="1.10.20.60">
    <property type="entry name" value="Glu-tRNAGln amidotransferase C subunit, N-terminal domain"/>
    <property type="match status" value="1"/>
</dbReference>
<dbReference type="HAMAP" id="MF_00122">
    <property type="entry name" value="GatC"/>
    <property type="match status" value="1"/>
</dbReference>
<dbReference type="InterPro" id="IPR036113">
    <property type="entry name" value="Asp/Glu-ADT_sf_sub_c"/>
</dbReference>
<dbReference type="InterPro" id="IPR003837">
    <property type="entry name" value="GatC"/>
</dbReference>
<dbReference type="NCBIfam" id="TIGR00135">
    <property type="entry name" value="gatC"/>
    <property type="match status" value="1"/>
</dbReference>
<dbReference type="Pfam" id="PF02686">
    <property type="entry name" value="GatC"/>
    <property type="match status" value="1"/>
</dbReference>
<dbReference type="SUPFAM" id="SSF141000">
    <property type="entry name" value="Glu-tRNAGln amidotransferase C subunit"/>
    <property type="match status" value="1"/>
</dbReference>
<proteinExistence type="inferred from homology"/>
<protein>
    <recommendedName>
        <fullName evidence="1">Aspartyl/glutamyl-tRNA(Asn/Gln) amidotransferase subunit C</fullName>
        <shortName evidence="1">Asp/Glu-ADT subunit C</shortName>
        <ecNumber evidence="1">6.3.5.-</ecNumber>
    </recommendedName>
</protein>
<comment type="function">
    <text evidence="1">Allows the formation of correctly charged Asn-tRNA(Asn) or Gln-tRNA(Gln) through the transamidation of misacylated Asp-tRNA(Asn) or Glu-tRNA(Gln) in organisms which lack either or both of asparaginyl-tRNA or glutaminyl-tRNA synthetases. The reaction takes place in the presence of glutamine and ATP through an activated phospho-Asp-tRNA(Asn) or phospho-Glu-tRNA(Gln).</text>
</comment>
<comment type="catalytic activity">
    <reaction evidence="1">
        <text>L-glutamyl-tRNA(Gln) + L-glutamine + ATP + H2O = L-glutaminyl-tRNA(Gln) + L-glutamate + ADP + phosphate + H(+)</text>
        <dbReference type="Rhea" id="RHEA:17521"/>
        <dbReference type="Rhea" id="RHEA-COMP:9681"/>
        <dbReference type="Rhea" id="RHEA-COMP:9684"/>
        <dbReference type="ChEBI" id="CHEBI:15377"/>
        <dbReference type="ChEBI" id="CHEBI:15378"/>
        <dbReference type="ChEBI" id="CHEBI:29985"/>
        <dbReference type="ChEBI" id="CHEBI:30616"/>
        <dbReference type="ChEBI" id="CHEBI:43474"/>
        <dbReference type="ChEBI" id="CHEBI:58359"/>
        <dbReference type="ChEBI" id="CHEBI:78520"/>
        <dbReference type="ChEBI" id="CHEBI:78521"/>
        <dbReference type="ChEBI" id="CHEBI:456216"/>
    </reaction>
</comment>
<comment type="catalytic activity">
    <reaction evidence="1">
        <text>L-aspartyl-tRNA(Asn) + L-glutamine + ATP + H2O = L-asparaginyl-tRNA(Asn) + L-glutamate + ADP + phosphate + 2 H(+)</text>
        <dbReference type="Rhea" id="RHEA:14513"/>
        <dbReference type="Rhea" id="RHEA-COMP:9674"/>
        <dbReference type="Rhea" id="RHEA-COMP:9677"/>
        <dbReference type="ChEBI" id="CHEBI:15377"/>
        <dbReference type="ChEBI" id="CHEBI:15378"/>
        <dbReference type="ChEBI" id="CHEBI:29985"/>
        <dbReference type="ChEBI" id="CHEBI:30616"/>
        <dbReference type="ChEBI" id="CHEBI:43474"/>
        <dbReference type="ChEBI" id="CHEBI:58359"/>
        <dbReference type="ChEBI" id="CHEBI:78515"/>
        <dbReference type="ChEBI" id="CHEBI:78516"/>
        <dbReference type="ChEBI" id="CHEBI:456216"/>
    </reaction>
</comment>
<comment type="subunit">
    <text evidence="1">Heterotrimer of A, B and C subunits.</text>
</comment>
<comment type="similarity">
    <text evidence="1">Belongs to the GatC family.</text>
</comment>
<evidence type="ECO:0000255" key="1">
    <source>
        <dbReference type="HAMAP-Rule" id="MF_00122"/>
    </source>
</evidence>
<gene>
    <name evidence="1" type="primary">gatC</name>
    <name type="ordered locus">Bcav_1383</name>
</gene>
<name>GATC_BEUC1</name>
<reference key="1">
    <citation type="journal article" date="2009" name="Stand. Genomic Sci.">
        <title>Complete genome sequence of Beutenbergia cavernae type strain (HKI 0122).</title>
        <authorList>
            <person name="Land M."/>
            <person name="Pukall R."/>
            <person name="Abt B."/>
            <person name="Goker M."/>
            <person name="Rohde M."/>
            <person name="Glavina Del Rio T."/>
            <person name="Tice H."/>
            <person name="Copeland A."/>
            <person name="Cheng J.F."/>
            <person name="Lucas S."/>
            <person name="Chen F."/>
            <person name="Nolan M."/>
            <person name="Bruce D."/>
            <person name="Goodwin L."/>
            <person name="Pitluck S."/>
            <person name="Ivanova N."/>
            <person name="Mavromatis K."/>
            <person name="Ovchinnikova G."/>
            <person name="Pati A."/>
            <person name="Chen A."/>
            <person name="Palaniappan K."/>
            <person name="Hauser L."/>
            <person name="Chang Y.J."/>
            <person name="Jefferies C.C."/>
            <person name="Saunders E."/>
            <person name="Brettin T."/>
            <person name="Detter J.C."/>
            <person name="Han C."/>
            <person name="Chain P."/>
            <person name="Bristow J."/>
            <person name="Eisen J.A."/>
            <person name="Markowitz V."/>
            <person name="Hugenholtz P."/>
            <person name="Kyrpides N.C."/>
            <person name="Klenk H.P."/>
            <person name="Lapidus A."/>
        </authorList>
    </citation>
    <scope>NUCLEOTIDE SEQUENCE [LARGE SCALE GENOMIC DNA]</scope>
    <source>
        <strain>ATCC BAA-8 / DSM 12333 / CCUG 43141 / JCM 11478 / NBRC 16432 / NCIMB 13614 / HKI 0122</strain>
    </source>
</reference>